<gene>
    <name evidence="1" type="primary">engB</name>
    <name type="ordered locus">CGSHiGG_09250</name>
</gene>
<comment type="function">
    <text evidence="1">Necessary for normal cell division and for the maintenance of normal septation.</text>
</comment>
<comment type="cofactor">
    <cofactor evidence="1">
        <name>Mg(2+)</name>
        <dbReference type="ChEBI" id="CHEBI:18420"/>
    </cofactor>
</comment>
<comment type="similarity">
    <text evidence="1">Belongs to the TRAFAC class TrmE-Era-EngA-EngB-Septin-like GTPase superfamily. EngB GTPase family.</text>
</comment>
<protein>
    <recommendedName>
        <fullName evidence="1">Probable GTP-binding protein EngB</fullName>
    </recommendedName>
</protein>
<accession>A5UIP2</accession>
<organism>
    <name type="scientific">Haemophilus influenzae (strain PittGG)</name>
    <dbReference type="NCBI Taxonomy" id="374931"/>
    <lineage>
        <taxon>Bacteria</taxon>
        <taxon>Pseudomonadati</taxon>
        <taxon>Pseudomonadota</taxon>
        <taxon>Gammaproteobacteria</taxon>
        <taxon>Pasteurellales</taxon>
        <taxon>Pasteurellaceae</taxon>
        <taxon>Haemophilus</taxon>
    </lineage>
</organism>
<dbReference type="EMBL" id="CP000672">
    <property type="protein sequence ID" value="ABR00648.1"/>
    <property type="molecule type" value="Genomic_DNA"/>
</dbReference>
<dbReference type="SMR" id="A5UIP2"/>
<dbReference type="KEGG" id="hiq:CGSHiGG_09250"/>
<dbReference type="HOGENOM" id="CLU_033732_1_0_6"/>
<dbReference type="Proteomes" id="UP000001990">
    <property type="component" value="Chromosome"/>
</dbReference>
<dbReference type="GO" id="GO:0005829">
    <property type="term" value="C:cytosol"/>
    <property type="evidence" value="ECO:0007669"/>
    <property type="project" value="TreeGrafter"/>
</dbReference>
<dbReference type="GO" id="GO:0005525">
    <property type="term" value="F:GTP binding"/>
    <property type="evidence" value="ECO:0007669"/>
    <property type="project" value="UniProtKB-UniRule"/>
</dbReference>
<dbReference type="GO" id="GO:0046872">
    <property type="term" value="F:metal ion binding"/>
    <property type="evidence" value="ECO:0007669"/>
    <property type="project" value="UniProtKB-KW"/>
</dbReference>
<dbReference type="GO" id="GO:0000917">
    <property type="term" value="P:division septum assembly"/>
    <property type="evidence" value="ECO:0007669"/>
    <property type="project" value="UniProtKB-KW"/>
</dbReference>
<dbReference type="CDD" id="cd01876">
    <property type="entry name" value="YihA_EngB"/>
    <property type="match status" value="1"/>
</dbReference>
<dbReference type="FunFam" id="3.40.50.300:FF:000098">
    <property type="entry name" value="Probable GTP-binding protein EngB"/>
    <property type="match status" value="1"/>
</dbReference>
<dbReference type="Gene3D" id="3.40.50.300">
    <property type="entry name" value="P-loop containing nucleotide triphosphate hydrolases"/>
    <property type="match status" value="1"/>
</dbReference>
<dbReference type="HAMAP" id="MF_00321">
    <property type="entry name" value="GTPase_EngB"/>
    <property type="match status" value="1"/>
</dbReference>
<dbReference type="InterPro" id="IPR030393">
    <property type="entry name" value="G_ENGB_dom"/>
</dbReference>
<dbReference type="InterPro" id="IPR006073">
    <property type="entry name" value="GTP-bd"/>
</dbReference>
<dbReference type="InterPro" id="IPR019987">
    <property type="entry name" value="GTP-bd_ribosome_bio_YsxC"/>
</dbReference>
<dbReference type="InterPro" id="IPR027417">
    <property type="entry name" value="P-loop_NTPase"/>
</dbReference>
<dbReference type="NCBIfam" id="TIGR03598">
    <property type="entry name" value="GTPase_YsxC"/>
    <property type="match status" value="1"/>
</dbReference>
<dbReference type="PANTHER" id="PTHR11649:SF13">
    <property type="entry name" value="ENGB-TYPE G DOMAIN-CONTAINING PROTEIN"/>
    <property type="match status" value="1"/>
</dbReference>
<dbReference type="PANTHER" id="PTHR11649">
    <property type="entry name" value="MSS1/TRME-RELATED GTP-BINDING PROTEIN"/>
    <property type="match status" value="1"/>
</dbReference>
<dbReference type="Pfam" id="PF01926">
    <property type="entry name" value="MMR_HSR1"/>
    <property type="match status" value="1"/>
</dbReference>
<dbReference type="SUPFAM" id="SSF52540">
    <property type="entry name" value="P-loop containing nucleoside triphosphate hydrolases"/>
    <property type="match status" value="1"/>
</dbReference>
<dbReference type="PROSITE" id="PS51706">
    <property type="entry name" value="G_ENGB"/>
    <property type="match status" value="1"/>
</dbReference>
<feature type="chain" id="PRO_1000005817" description="Probable GTP-binding protein EngB">
    <location>
        <begin position="1"/>
        <end position="205"/>
    </location>
</feature>
<feature type="domain" description="EngB-type G" evidence="1">
    <location>
        <begin position="27"/>
        <end position="201"/>
    </location>
</feature>
<feature type="binding site" evidence="1">
    <location>
        <begin position="35"/>
        <end position="42"/>
    </location>
    <ligand>
        <name>GTP</name>
        <dbReference type="ChEBI" id="CHEBI:37565"/>
    </ligand>
</feature>
<feature type="binding site" evidence="1">
    <location>
        <position position="42"/>
    </location>
    <ligand>
        <name>Mg(2+)</name>
        <dbReference type="ChEBI" id="CHEBI:18420"/>
    </ligand>
</feature>
<feature type="binding site" evidence="1">
    <location>
        <begin position="62"/>
        <end position="66"/>
    </location>
    <ligand>
        <name>GTP</name>
        <dbReference type="ChEBI" id="CHEBI:37565"/>
    </ligand>
</feature>
<feature type="binding site" evidence="1">
    <location>
        <position position="64"/>
    </location>
    <ligand>
        <name>Mg(2+)</name>
        <dbReference type="ChEBI" id="CHEBI:18420"/>
    </ligand>
</feature>
<feature type="binding site" evidence="1">
    <location>
        <begin position="80"/>
        <end position="83"/>
    </location>
    <ligand>
        <name>GTP</name>
        <dbReference type="ChEBI" id="CHEBI:37565"/>
    </ligand>
</feature>
<feature type="binding site" evidence="1">
    <location>
        <begin position="147"/>
        <end position="150"/>
    </location>
    <ligand>
        <name>GTP</name>
        <dbReference type="ChEBI" id="CHEBI:37565"/>
    </ligand>
</feature>
<feature type="binding site" evidence="1">
    <location>
        <begin position="180"/>
        <end position="182"/>
    </location>
    <ligand>
        <name>GTP</name>
        <dbReference type="ChEBI" id="CHEBI:37565"/>
    </ligand>
</feature>
<keyword id="KW-0131">Cell cycle</keyword>
<keyword id="KW-0132">Cell division</keyword>
<keyword id="KW-0342">GTP-binding</keyword>
<keyword id="KW-0460">Magnesium</keyword>
<keyword id="KW-0479">Metal-binding</keyword>
<keyword id="KW-0547">Nucleotide-binding</keyword>
<keyword id="KW-0717">Septation</keyword>
<proteinExistence type="inferred from homology"/>
<sequence>MSEIKLNYHKTHFLTSAPNIRSIPEDTGIEIAFAGRSNAGKSTALNALTNQKNLARTSKTPGRTQLINLFEVEPNCKLVDLPGYGYAAVPEQMKIQWQKSLGEYLQKRECLAGLVVLMDIRHPLKDLDQQMIEWAVSANLPVLLLLTKADKLSQSARSKQVKMVREAILPFQGDIQVEAFSAQNKIGIDKLAVKLDFWFSPLFAE</sequence>
<evidence type="ECO:0000255" key="1">
    <source>
        <dbReference type="HAMAP-Rule" id="MF_00321"/>
    </source>
</evidence>
<name>ENGB_HAEIG</name>
<reference key="1">
    <citation type="journal article" date="2007" name="Genome Biol.">
        <title>Characterization and modeling of the Haemophilus influenzae core and supragenomes based on the complete genomic sequences of Rd and 12 clinical nontypeable strains.</title>
        <authorList>
            <person name="Hogg J.S."/>
            <person name="Hu F.Z."/>
            <person name="Janto B."/>
            <person name="Boissy R."/>
            <person name="Hayes J."/>
            <person name="Keefe R."/>
            <person name="Post J.C."/>
            <person name="Ehrlich G.D."/>
        </authorList>
    </citation>
    <scope>NUCLEOTIDE SEQUENCE [LARGE SCALE GENOMIC DNA]</scope>
    <source>
        <strain>PittGG</strain>
    </source>
</reference>